<proteinExistence type="inferred from homology"/>
<organism>
    <name type="scientific">Edwardsiella ictaluri (strain 93-146)</name>
    <dbReference type="NCBI Taxonomy" id="634503"/>
    <lineage>
        <taxon>Bacteria</taxon>
        <taxon>Pseudomonadati</taxon>
        <taxon>Pseudomonadota</taxon>
        <taxon>Gammaproteobacteria</taxon>
        <taxon>Enterobacterales</taxon>
        <taxon>Hafniaceae</taxon>
        <taxon>Edwardsiella</taxon>
    </lineage>
</organism>
<accession>C5B9I5</accession>
<protein>
    <recommendedName>
        <fullName evidence="1">UPF0231 protein NT01EI_0766</fullName>
    </recommendedName>
</protein>
<dbReference type="EMBL" id="CP001600">
    <property type="protein sequence ID" value="ACR67987.1"/>
    <property type="molecule type" value="Genomic_DNA"/>
</dbReference>
<dbReference type="RefSeq" id="WP_015870179.1">
    <property type="nucleotide sequence ID" value="NZ_CP169062.1"/>
</dbReference>
<dbReference type="SMR" id="C5B9I5"/>
<dbReference type="STRING" id="67780.B6E78_14450"/>
<dbReference type="KEGG" id="eic:NT01EI_0766"/>
<dbReference type="PATRIC" id="fig|634503.3.peg.692"/>
<dbReference type="HOGENOM" id="CLU_139226_0_0_6"/>
<dbReference type="OrthoDB" id="5739292at2"/>
<dbReference type="Proteomes" id="UP000001485">
    <property type="component" value="Chromosome"/>
</dbReference>
<dbReference type="HAMAP" id="MF_01053">
    <property type="entry name" value="UPF0231"/>
    <property type="match status" value="1"/>
</dbReference>
<dbReference type="InterPro" id="IPR008249">
    <property type="entry name" value="UPF0231"/>
</dbReference>
<dbReference type="NCBIfam" id="NF003576">
    <property type="entry name" value="PRK05248.1-3"/>
    <property type="match status" value="1"/>
</dbReference>
<dbReference type="Pfam" id="PF06062">
    <property type="entry name" value="UPF0231"/>
    <property type="match status" value="1"/>
</dbReference>
<dbReference type="PIRSF" id="PIRSF006287">
    <property type="entry name" value="UCP006287"/>
    <property type="match status" value="1"/>
</dbReference>
<evidence type="ECO:0000255" key="1">
    <source>
        <dbReference type="HAMAP-Rule" id="MF_01053"/>
    </source>
</evidence>
<gene>
    <name type="ordered locus">NT01EI_0766</name>
</gene>
<feature type="chain" id="PRO_1000213433" description="UPF0231 protein NT01EI_0766">
    <location>
        <begin position="1"/>
        <end position="120"/>
    </location>
</feature>
<sequence length="120" mass="13951">MDYEFRHDIGGQVIALFSMGHEAVGHWLNEEVKGDLALLSRIEQEAAALKGSERQWQLEGHEYTLWLDSEEVMVRANQLALESDELDDGMRYYDEESLSLCGLEDFLQVLTRYRSFIQQH</sequence>
<comment type="similarity">
    <text evidence="1">Belongs to the UPF0231 family.</text>
</comment>
<name>Y766_EDWI9</name>
<reference key="1">
    <citation type="submission" date="2009-03" db="EMBL/GenBank/DDBJ databases">
        <title>Complete genome sequence of Edwardsiella ictaluri 93-146.</title>
        <authorList>
            <person name="Williams M.L."/>
            <person name="Gillaspy A.F."/>
            <person name="Dyer D.W."/>
            <person name="Thune R.L."/>
            <person name="Waldbieser G.C."/>
            <person name="Schuster S.C."/>
            <person name="Gipson J."/>
            <person name="Zaitshik J."/>
            <person name="Landry C."/>
            <person name="Lawrence M.L."/>
        </authorList>
    </citation>
    <scope>NUCLEOTIDE SEQUENCE [LARGE SCALE GENOMIC DNA]</scope>
    <source>
        <strain>93-146</strain>
    </source>
</reference>